<dbReference type="EMBL" id="GG700653">
    <property type="protein sequence ID" value="EGD89154.2"/>
    <property type="molecule type" value="Genomic_DNA"/>
</dbReference>
<dbReference type="SMR" id="F2SSE4"/>
<dbReference type="STRING" id="559305.F2SSE4"/>
<dbReference type="VEuPathDB" id="FungiDB:TERG_05396"/>
<dbReference type="eggNOG" id="ENOG502S526">
    <property type="taxonomic scope" value="Eukaryota"/>
</dbReference>
<dbReference type="HOGENOM" id="CLU_035741_0_0_1"/>
<dbReference type="InParanoid" id="F2SSE4"/>
<dbReference type="OMA" id="PFDSMVN"/>
<dbReference type="OrthoDB" id="674948at2759"/>
<dbReference type="PHI-base" id="PHI:10468"/>
<dbReference type="Proteomes" id="UP000008864">
    <property type="component" value="Unassembled WGS sequence"/>
</dbReference>
<dbReference type="GO" id="GO:0005634">
    <property type="term" value="C:nucleus"/>
    <property type="evidence" value="ECO:0007669"/>
    <property type="project" value="UniProtKB-SubCell"/>
</dbReference>
<dbReference type="GO" id="GO:0003677">
    <property type="term" value="F:DNA binding"/>
    <property type="evidence" value="ECO:0007669"/>
    <property type="project" value="UniProtKB-KW"/>
</dbReference>
<dbReference type="GO" id="GO:0000981">
    <property type="term" value="F:DNA-binding transcription factor activity, RNA polymerase II-specific"/>
    <property type="evidence" value="ECO:0007669"/>
    <property type="project" value="InterPro"/>
</dbReference>
<dbReference type="GO" id="GO:0045944">
    <property type="term" value="P:positive regulation of transcription by RNA polymerase II"/>
    <property type="evidence" value="ECO:0007669"/>
    <property type="project" value="InterPro"/>
</dbReference>
<dbReference type="GO" id="GO:0006986">
    <property type="term" value="P:response to unfolded protein"/>
    <property type="evidence" value="ECO:0007669"/>
    <property type="project" value="UniProtKB-KW"/>
</dbReference>
<dbReference type="CDD" id="cd14710">
    <property type="entry name" value="bZIP_HAC1-like"/>
    <property type="match status" value="1"/>
</dbReference>
<dbReference type="FunFam" id="1.20.5.170:FF:000101">
    <property type="entry name" value="BZIP transcription factor HacA"/>
    <property type="match status" value="1"/>
</dbReference>
<dbReference type="Gene3D" id="1.20.5.170">
    <property type="match status" value="1"/>
</dbReference>
<dbReference type="InterPro" id="IPR004827">
    <property type="entry name" value="bZIP"/>
</dbReference>
<dbReference type="InterPro" id="IPR046347">
    <property type="entry name" value="bZIP_sf"/>
</dbReference>
<dbReference type="InterPro" id="IPR044280">
    <property type="entry name" value="Hac1/HY5"/>
</dbReference>
<dbReference type="PANTHER" id="PTHR46714">
    <property type="entry name" value="TRANSCRIPTIONAL ACTIVATOR HAC1"/>
    <property type="match status" value="1"/>
</dbReference>
<dbReference type="PANTHER" id="PTHR46714:SF6">
    <property type="entry name" value="TRANSCRIPTIONAL ACTIVATOR HAC1"/>
    <property type="match status" value="1"/>
</dbReference>
<dbReference type="Pfam" id="PF07716">
    <property type="entry name" value="bZIP_2"/>
    <property type="match status" value="1"/>
</dbReference>
<dbReference type="SMART" id="SM00338">
    <property type="entry name" value="BRLZ"/>
    <property type="match status" value="1"/>
</dbReference>
<dbReference type="SUPFAM" id="SSF57959">
    <property type="entry name" value="Leucine zipper domain"/>
    <property type="match status" value="1"/>
</dbReference>
<dbReference type="PROSITE" id="PS50217">
    <property type="entry name" value="BZIP"/>
    <property type="match status" value="1"/>
</dbReference>
<accession>F2SSE4</accession>
<sequence>MTESTFAVETFSMDSMSPSPGAEIPRLTVSPADTTLKFEDLVPEGLPKVDTPKPAEKKPVKKRKSWGQELPTPKTNLPPRKRAKTEDEKEQRRIERVLRNRAAAQISRERKRLEIEKLEGEKLKIEQQNEFLLRRLSQMEAENNRLSQQVAKLASEIQTSKSNPGSPASASASASTSSISATLAPSTSPTLAPVLFKQENDLLDNIDSIPFTINPDPSTTTTTTTTTTTSNNISSTSSTTLSPADLDHSSATPSDLAQHPAAVFHLNIPLLREHDHVHPPPLSDADLSRLFDADSSSEPDLSFLEDGFSLELLPDSDLGPFAFDSLVDLGPDEDNQQQQQQLQQKLDDSIGFPEQTPLPASGLQPSFGASLERCDEQGIAAGAQ</sequence>
<comment type="function">
    <text evidence="4">Master transcriptional regulator of the unfolded protein response (UPR) that recognizes and binds to the UPR element (UPRE) in the promoter of UPR-regulated genes (PubMed:32153523). Exposure to antifungals and ER-stressing agents initiates the activation of hacA which occurs when a 20 nucleotide fragment is removed from part of the exon-2 and part of intron-2, which in turn promotes the arisen of the DNA binding site motif and a dimer interface domain (PubMed:32153523). Modulates the expression of genes related to cell wall synthesis, ergosterol biosynthesis, pigmentation, heat shock proteins, and the genes coding for mannosyltransferase enzymes (PubMed:32153523). Plays a key role in both response to stress and host-pathogen interaction (PubMed:32153523).</text>
</comment>
<comment type="subcellular location">
    <subcellularLocation>
        <location evidence="1">Nucleus</location>
    </subcellularLocation>
</comment>
<comment type="induction">
    <text evidence="3">Expression in up-regulated upon exposure to itraconazole.</text>
</comment>
<comment type="disruption phenotype">
    <text evidence="4">Leads to changes in the cell wall and cellular membrane composition as well as an increase in susceptibility toward azole and cell wall disturbing agents (PubMed:32153523). Presents significant defects in important virulence traits like thermotolerance and growth on keratin substrates (PubMed:32153523). Also leads to changes in the pro-inflammatory cytokine release during host-pathogen interaction, with an increase in TNF-alpha and a decrease in interleukin-8, which might be related to differences in pathogen-associated molecular patterns (PAMPs) in the cell wall (PubMed:32153523).</text>
</comment>
<comment type="similarity">
    <text evidence="6">Belongs to the bZIP family.</text>
</comment>
<name>HACA_TRIRC</name>
<evidence type="ECO:0000255" key="1">
    <source>
        <dbReference type="PROSITE-ProRule" id="PRU00978"/>
    </source>
</evidence>
<evidence type="ECO:0000256" key="2">
    <source>
        <dbReference type="SAM" id="MobiDB-lite"/>
    </source>
</evidence>
<evidence type="ECO:0000269" key="3">
    <source>
    </source>
</evidence>
<evidence type="ECO:0000269" key="4">
    <source>
    </source>
</evidence>
<evidence type="ECO:0000303" key="5">
    <source>
    </source>
</evidence>
<evidence type="ECO:0000305" key="6"/>
<proteinExistence type="evidence at transcript level"/>
<gene>
    <name evidence="5" type="primary">hacA</name>
    <name type="ORF">TERG_05396</name>
</gene>
<organism>
    <name type="scientific">Trichophyton rubrum (strain ATCC MYA-4607 / CBS 118892)</name>
    <name type="common">Athlete's foot fungus</name>
    <dbReference type="NCBI Taxonomy" id="559305"/>
    <lineage>
        <taxon>Eukaryota</taxon>
        <taxon>Fungi</taxon>
        <taxon>Dikarya</taxon>
        <taxon>Ascomycota</taxon>
        <taxon>Pezizomycotina</taxon>
        <taxon>Eurotiomycetes</taxon>
        <taxon>Eurotiomycetidae</taxon>
        <taxon>Onygenales</taxon>
        <taxon>Arthrodermataceae</taxon>
        <taxon>Trichophyton</taxon>
    </lineage>
</organism>
<reference key="1">
    <citation type="journal article" date="2012" name="MBio">
        <title>Comparative genome analysis of Trichophyton rubrum and related dermatophytes reveals candidate genes involved in infection.</title>
        <authorList>
            <person name="Martinez D.A."/>
            <person name="Oliver B.G."/>
            <person name="Graeser Y."/>
            <person name="Goldberg J.M."/>
            <person name="Li W."/>
            <person name="Martinez-Rossi N.M."/>
            <person name="Monod M."/>
            <person name="Shelest E."/>
            <person name="Barton R.C."/>
            <person name="Birch E."/>
            <person name="Brakhage A.A."/>
            <person name="Chen Z."/>
            <person name="Gurr S.J."/>
            <person name="Heiman D."/>
            <person name="Heitman J."/>
            <person name="Kosti I."/>
            <person name="Rossi A."/>
            <person name="Saif S."/>
            <person name="Samalova M."/>
            <person name="Saunders C.W."/>
            <person name="Shea T."/>
            <person name="Summerbell R.C."/>
            <person name="Xu J."/>
            <person name="Young S."/>
            <person name="Zeng Q."/>
            <person name="Birren B.W."/>
            <person name="Cuomo C.A."/>
            <person name="White T.C."/>
        </authorList>
    </citation>
    <scope>NUCLEOTIDE SEQUENCE [LARGE SCALE GENOMIC DNA]</scope>
    <source>
        <strain>ATCC MYA-4607 / CBS 118892</strain>
    </source>
</reference>
<reference key="2">
    <citation type="journal article" date="2009" name="Med. Mycol.">
        <title>Transcriptional profiles of Trichophyton rubrum in response to itraconazole.</title>
        <authorList>
            <person name="Diao Y."/>
            <person name="Zhao R."/>
            <person name="Deng X."/>
            <person name="Leng W."/>
            <person name="Peng J."/>
            <person name="Jin Q."/>
        </authorList>
    </citation>
    <scope>INDUCTION</scope>
</reference>
<reference key="3">
    <citation type="journal article" date="2020" name="Front. Microbiol.">
        <title>HacA Governs Virulence Traits and Adaptive Stress Responses in Trichophyton rubrum.</title>
        <authorList>
            <person name="Bitencourt T.A."/>
            <person name="Lang E.A.S."/>
            <person name="Sanches P.R."/>
            <person name="Peres N.T.A."/>
            <person name="Oliveira V.M."/>
            <person name="Fachin A.L."/>
            <person name="Rossi A."/>
            <person name="Martinez-Rossi N.M."/>
        </authorList>
    </citation>
    <scope>FUNCTION</scope>
    <scope>DISRUPTION PHENOTYPE</scope>
</reference>
<feature type="chain" id="PRO_0000460408" description="Transcriptional regulator of the unfolded protein response hacA">
    <location>
        <begin position="1"/>
        <end position="384"/>
    </location>
</feature>
<feature type="domain" description="bZIP" evidence="1">
    <location>
        <begin position="90"/>
        <end position="153"/>
    </location>
</feature>
<feature type="region of interest" description="Disordered" evidence="2">
    <location>
        <begin position="1"/>
        <end position="27"/>
    </location>
</feature>
<feature type="region of interest" description="Disordered" evidence="2">
    <location>
        <begin position="41"/>
        <end position="94"/>
    </location>
</feature>
<feature type="region of interest" description="Basic motif" evidence="1">
    <location>
        <begin position="92"/>
        <end position="101"/>
    </location>
</feature>
<feature type="region of interest" description="Leucine-zipper" evidence="1">
    <location>
        <begin position="106"/>
        <end position="113"/>
    </location>
</feature>
<feature type="region of interest" description="Disordered" evidence="2">
    <location>
        <begin position="208"/>
        <end position="256"/>
    </location>
</feature>
<feature type="region of interest" description="Disordered" evidence="2">
    <location>
        <begin position="331"/>
        <end position="384"/>
    </location>
</feature>
<feature type="compositionally biased region" description="Polar residues" evidence="2">
    <location>
        <begin position="1"/>
        <end position="18"/>
    </location>
</feature>
<feature type="compositionally biased region" description="Basic and acidic residues" evidence="2">
    <location>
        <begin position="84"/>
        <end position="94"/>
    </location>
</feature>
<feature type="compositionally biased region" description="Low complexity" evidence="2">
    <location>
        <begin position="218"/>
        <end position="240"/>
    </location>
</feature>
<keyword id="KW-0238">DNA-binding</keyword>
<keyword id="KW-0539">Nucleus</keyword>
<keyword id="KW-1185">Reference proteome</keyword>
<keyword id="KW-0804">Transcription</keyword>
<keyword id="KW-0805">Transcription regulation</keyword>
<keyword id="KW-0834">Unfolded protein response</keyword>
<keyword id="KW-0843">Virulence</keyword>
<protein>
    <recommendedName>
        <fullName evidence="5">Transcriptional regulator of the unfolded protein response hacA</fullName>
    </recommendedName>
    <alternativeName>
        <fullName evidence="5">BZIP transcription factor hacA</fullName>
    </alternativeName>
</protein>